<accession>P0C409</accession>
<accession>P12162</accession>
<accession>Q6QXW2</accession>
<accession>Q6QY88</accession>
<keyword id="KW-0150">Chloroplast</keyword>
<keyword id="KW-0472">Membrane</keyword>
<keyword id="KW-0602">Photosynthesis</keyword>
<keyword id="KW-0604">Photosystem II</keyword>
<keyword id="KW-0934">Plastid</keyword>
<keyword id="KW-0674">Reaction center</keyword>
<keyword id="KW-1185">Reference proteome</keyword>
<keyword id="KW-0793">Thylakoid</keyword>
<keyword id="KW-0812">Transmembrane</keyword>
<keyword id="KW-1133">Transmembrane helix</keyword>
<sequence length="61" mass="6982">MPNILSLTCICFNSVIYPTSFFFAKLPEAYAIFNPIVDFMPVIPVLFFLLAFVWQAAVSFR</sequence>
<protein>
    <recommendedName>
        <fullName evidence="1">Photosystem II reaction center protein K</fullName>
        <shortName evidence="1">PSII-K</shortName>
    </recommendedName>
</protein>
<comment type="function">
    <text evidence="1">One of the components of the core complex of photosystem II (PSII). PSII is a light-driven water:plastoquinone oxidoreductase that uses light energy to abstract electrons from H(2)O, generating O(2) and a proton gradient subsequently used for ATP formation. It consists of a core antenna complex that captures photons, and an electron transfer chain that converts photonic excitation into a charge separation.</text>
</comment>
<comment type="subunit">
    <text evidence="1">PSII is composed of 1 copy each of membrane proteins PsbA, PsbB, PsbC, PsbD, PsbE, PsbF, PsbH, PsbI, PsbJ, PsbK, PsbL, PsbM, PsbT, PsbX, PsbY, PsbZ, Psb30/Ycf12, at least 3 peripheral proteins of the oxygen-evolving complex and a large number of cofactors. It forms dimeric complexes.</text>
</comment>
<comment type="subcellular location">
    <subcellularLocation>
        <location evidence="1">Plastid</location>
        <location evidence="1">Chloroplast thylakoid membrane</location>
        <topology evidence="1">Single-pass membrane protein</topology>
    </subcellularLocation>
</comment>
<comment type="similarity">
    <text evidence="1">Belongs to the PsbK family.</text>
</comment>
<feature type="propeptide" id="PRO_0000289564" evidence="1">
    <location>
        <begin position="1"/>
        <end position="24"/>
    </location>
</feature>
<feature type="chain" id="PRO_0000289565" description="Photosystem II reaction center protein K" evidence="1">
    <location>
        <begin position="25"/>
        <end position="61"/>
    </location>
</feature>
<feature type="transmembrane region" description="Helical" evidence="1">
    <location>
        <begin position="32"/>
        <end position="52"/>
    </location>
</feature>
<dbReference type="EMBL" id="AY522329">
    <property type="protein sequence ID" value="AAS46041.1"/>
    <property type="molecule type" value="Genomic_DNA"/>
</dbReference>
<dbReference type="RefSeq" id="YP_009161347.1">
    <property type="nucleotide sequence ID" value="NC_027678.1"/>
</dbReference>
<dbReference type="RefSeq" id="YP_654201.1">
    <property type="nucleotide sequence ID" value="NC_008155.1"/>
</dbReference>
<dbReference type="SMR" id="P0C409"/>
<dbReference type="STRING" id="39946.P0C409"/>
<dbReference type="GeneID" id="4126917"/>
<dbReference type="Proteomes" id="UP000007015">
    <property type="component" value="Chloroplast"/>
</dbReference>
<dbReference type="GO" id="GO:0009535">
    <property type="term" value="C:chloroplast thylakoid membrane"/>
    <property type="evidence" value="ECO:0007669"/>
    <property type="project" value="UniProtKB-SubCell"/>
</dbReference>
<dbReference type="GO" id="GO:0009539">
    <property type="term" value="C:photosystem II reaction center"/>
    <property type="evidence" value="ECO:0007669"/>
    <property type="project" value="InterPro"/>
</dbReference>
<dbReference type="GO" id="GO:0009536">
    <property type="term" value="C:plastid"/>
    <property type="evidence" value="ECO:0000305"/>
    <property type="project" value="Gramene"/>
</dbReference>
<dbReference type="GO" id="GO:0015979">
    <property type="term" value="P:photosynthesis"/>
    <property type="evidence" value="ECO:0007669"/>
    <property type="project" value="UniProtKB-UniRule"/>
</dbReference>
<dbReference type="HAMAP" id="MF_00441">
    <property type="entry name" value="PSII_PsbK"/>
    <property type="match status" value="1"/>
</dbReference>
<dbReference type="InterPro" id="IPR003687">
    <property type="entry name" value="PSII_PsbK"/>
</dbReference>
<dbReference type="InterPro" id="IPR037270">
    <property type="entry name" value="PSII_PsbK_sf"/>
</dbReference>
<dbReference type="NCBIfam" id="NF002715">
    <property type="entry name" value="PRK02553.1"/>
    <property type="match status" value="1"/>
</dbReference>
<dbReference type="PANTHER" id="PTHR35325">
    <property type="match status" value="1"/>
</dbReference>
<dbReference type="PANTHER" id="PTHR35325:SF1">
    <property type="entry name" value="PHOTOSYSTEM II REACTION CENTER PROTEIN K"/>
    <property type="match status" value="1"/>
</dbReference>
<dbReference type="Pfam" id="PF02533">
    <property type="entry name" value="PsbK"/>
    <property type="match status" value="1"/>
</dbReference>
<dbReference type="SUPFAM" id="SSF161037">
    <property type="entry name" value="Photosystem II reaction center protein K, PsbK"/>
    <property type="match status" value="1"/>
</dbReference>
<organism>
    <name type="scientific">Oryza sativa subsp. indica</name>
    <name type="common">Rice</name>
    <dbReference type="NCBI Taxonomy" id="39946"/>
    <lineage>
        <taxon>Eukaryota</taxon>
        <taxon>Viridiplantae</taxon>
        <taxon>Streptophyta</taxon>
        <taxon>Embryophyta</taxon>
        <taxon>Tracheophyta</taxon>
        <taxon>Spermatophyta</taxon>
        <taxon>Magnoliopsida</taxon>
        <taxon>Liliopsida</taxon>
        <taxon>Poales</taxon>
        <taxon>Poaceae</taxon>
        <taxon>BOP clade</taxon>
        <taxon>Oryzoideae</taxon>
        <taxon>Oryzeae</taxon>
        <taxon>Oryzinae</taxon>
        <taxon>Oryza</taxon>
        <taxon>Oryza sativa</taxon>
    </lineage>
</organism>
<geneLocation type="chloroplast"/>
<gene>
    <name evidence="1" type="primary">psbK</name>
    <name type="ORF">9311009</name>
</gene>
<reference key="1">
    <citation type="journal article" date="2004" name="Plant Physiol.">
        <title>A comparison of rice chloroplast genomes.</title>
        <authorList>
            <person name="Tang J."/>
            <person name="Xia H."/>
            <person name="Cao M."/>
            <person name="Zhang X."/>
            <person name="Zeng W."/>
            <person name="Hu S."/>
            <person name="Tong W."/>
            <person name="Wang J."/>
            <person name="Wang J."/>
            <person name="Yu J."/>
            <person name="Yang H."/>
            <person name="Zhu L."/>
        </authorList>
    </citation>
    <scope>NUCLEOTIDE SEQUENCE [LARGE SCALE GENOMIC DNA]</scope>
    <source>
        <strain>cv. 93-11</strain>
    </source>
</reference>
<evidence type="ECO:0000255" key="1">
    <source>
        <dbReference type="HAMAP-Rule" id="MF_00441"/>
    </source>
</evidence>
<proteinExistence type="inferred from homology"/>
<name>PSBK_ORYSI</name>